<sequence>MTDRLHIVGGGMAGSEAAWQAAQQGIDVVIHEMRPTVGTFAHQTGNLAEMVCSNSFRSDDDEQNAVGLLHWEMRAAGGLIMSAADAHRLPAGGALAVDRDPFAETVTARLHAHPRVSVTAEEVTELPRDGHWIFATGPLTSPALGAAIQAETGAEALAFFDAIAPIVYADTIDMSRAWMQSRYDKGETEEERTAYLNCPMDRDQYEAFIDALLAADKTEFHEGETATYFDGCLPIEVMAERGRETLRHGPMKPVGLTNPHQPDVKAYAVVQLRRDNALGTLYNIVGFQTKMKYGAQTAVFKTIPGLENASFARLGGIHRNTFLNSPTLLDAQMRMKSRPNIRFAGQITGVEGYVESAAMGLLAGRLAAAEIQGRALPEVPQDSAMGALIHHITGGAEAKTFQPMNVNFGLFRPVDGLKGGRRGRKDRYKAYTDRAKEAWTSWLAEAENG</sequence>
<gene>
    <name evidence="1" type="primary">trmFO</name>
    <name type="synonym">gid</name>
    <name type="ordered locus">SPO1686</name>
</gene>
<dbReference type="EC" id="2.1.1.74" evidence="1"/>
<dbReference type="EMBL" id="CP000031">
    <property type="protein sequence ID" value="AAV94971.1"/>
    <property type="molecule type" value="Genomic_DNA"/>
</dbReference>
<dbReference type="RefSeq" id="WP_011047421.1">
    <property type="nucleotide sequence ID" value="NC_003911.12"/>
</dbReference>
<dbReference type="SMR" id="Q5LST0"/>
<dbReference type="STRING" id="246200.SPO1686"/>
<dbReference type="PaxDb" id="246200-SPO1686"/>
<dbReference type="KEGG" id="sil:SPO1686"/>
<dbReference type="eggNOG" id="COG1206">
    <property type="taxonomic scope" value="Bacteria"/>
</dbReference>
<dbReference type="HOGENOM" id="CLU_033057_1_0_5"/>
<dbReference type="OrthoDB" id="9803114at2"/>
<dbReference type="Proteomes" id="UP000001023">
    <property type="component" value="Chromosome"/>
</dbReference>
<dbReference type="GO" id="GO:0005829">
    <property type="term" value="C:cytosol"/>
    <property type="evidence" value="ECO:0007669"/>
    <property type="project" value="TreeGrafter"/>
</dbReference>
<dbReference type="GO" id="GO:0050660">
    <property type="term" value="F:flavin adenine dinucleotide binding"/>
    <property type="evidence" value="ECO:0007669"/>
    <property type="project" value="UniProtKB-UniRule"/>
</dbReference>
<dbReference type="GO" id="GO:0047151">
    <property type="term" value="F:tRNA (uracil(54)-C5)-methyltransferase activity, 5,10-methylenetetrahydrofolate-dependent"/>
    <property type="evidence" value="ECO:0007669"/>
    <property type="project" value="UniProtKB-UniRule"/>
</dbReference>
<dbReference type="GO" id="GO:0030488">
    <property type="term" value="P:tRNA methylation"/>
    <property type="evidence" value="ECO:0007669"/>
    <property type="project" value="TreeGrafter"/>
</dbReference>
<dbReference type="GO" id="GO:0002098">
    <property type="term" value="P:tRNA wobble uridine modification"/>
    <property type="evidence" value="ECO:0007669"/>
    <property type="project" value="TreeGrafter"/>
</dbReference>
<dbReference type="Gene3D" id="3.50.50.60">
    <property type="entry name" value="FAD/NAD(P)-binding domain"/>
    <property type="match status" value="2"/>
</dbReference>
<dbReference type="HAMAP" id="MF_01037">
    <property type="entry name" value="TrmFO"/>
    <property type="match status" value="1"/>
</dbReference>
<dbReference type="InterPro" id="IPR036188">
    <property type="entry name" value="FAD/NAD-bd_sf"/>
</dbReference>
<dbReference type="InterPro" id="IPR002218">
    <property type="entry name" value="MnmG-rel"/>
</dbReference>
<dbReference type="InterPro" id="IPR040131">
    <property type="entry name" value="MnmG_N"/>
</dbReference>
<dbReference type="InterPro" id="IPR004417">
    <property type="entry name" value="TrmFO"/>
</dbReference>
<dbReference type="NCBIfam" id="TIGR00137">
    <property type="entry name" value="gid_trmFO"/>
    <property type="match status" value="1"/>
</dbReference>
<dbReference type="NCBIfam" id="NF003739">
    <property type="entry name" value="PRK05335.1"/>
    <property type="match status" value="1"/>
</dbReference>
<dbReference type="PANTHER" id="PTHR11806">
    <property type="entry name" value="GLUCOSE INHIBITED DIVISION PROTEIN A"/>
    <property type="match status" value="1"/>
</dbReference>
<dbReference type="PANTHER" id="PTHR11806:SF2">
    <property type="entry name" value="METHYLENETETRAHYDROFOLATE--TRNA-(URACIL-5-)-METHYLTRANSFERASE TRMFO"/>
    <property type="match status" value="1"/>
</dbReference>
<dbReference type="Pfam" id="PF01134">
    <property type="entry name" value="GIDA"/>
    <property type="match status" value="1"/>
</dbReference>
<dbReference type="SUPFAM" id="SSF51905">
    <property type="entry name" value="FAD/NAD(P)-binding domain"/>
    <property type="match status" value="1"/>
</dbReference>
<organism>
    <name type="scientific">Ruegeria pomeroyi (strain ATCC 700808 / DSM 15171 / DSS-3)</name>
    <name type="common">Silicibacter pomeroyi</name>
    <dbReference type="NCBI Taxonomy" id="246200"/>
    <lineage>
        <taxon>Bacteria</taxon>
        <taxon>Pseudomonadati</taxon>
        <taxon>Pseudomonadota</taxon>
        <taxon>Alphaproteobacteria</taxon>
        <taxon>Rhodobacterales</taxon>
        <taxon>Roseobacteraceae</taxon>
        <taxon>Ruegeria</taxon>
    </lineage>
</organism>
<name>TRMFO_RUEPO</name>
<protein>
    <recommendedName>
        <fullName evidence="1">Methylenetetrahydrofolate--tRNA-(uracil-5-)-methyltransferase TrmFO</fullName>
        <ecNumber evidence="1">2.1.1.74</ecNumber>
    </recommendedName>
    <alternativeName>
        <fullName evidence="1">Folate-dependent tRNA (uracil-5-)-methyltransferase</fullName>
    </alternativeName>
    <alternativeName>
        <fullName evidence="1">Folate-dependent tRNA(M-5-U54)-methyltransferase</fullName>
    </alternativeName>
</protein>
<evidence type="ECO:0000255" key="1">
    <source>
        <dbReference type="HAMAP-Rule" id="MF_01037"/>
    </source>
</evidence>
<accession>Q5LST0</accession>
<keyword id="KW-0963">Cytoplasm</keyword>
<keyword id="KW-0274">FAD</keyword>
<keyword id="KW-0285">Flavoprotein</keyword>
<keyword id="KW-0489">Methyltransferase</keyword>
<keyword id="KW-0520">NAD</keyword>
<keyword id="KW-0521">NADP</keyword>
<keyword id="KW-1185">Reference proteome</keyword>
<keyword id="KW-0808">Transferase</keyword>
<keyword id="KW-0819">tRNA processing</keyword>
<feature type="chain" id="PRO_0000117258" description="Methylenetetrahydrofolate--tRNA-(uracil-5-)-methyltransferase TrmFO">
    <location>
        <begin position="1"/>
        <end position="449"/>
    </location>
</feature>
<feature type="binding site" evidence="1">
    <location>
        <begin position="9"/>
        <end position="14"/>
    </location>
    <ligand>
        <name>FAD</name>
        <dbReference type="ChEBI" id="CHEBI:57692"/>
    </ligand>
</feature>
<proteinExistence type="inferred from homology"/>
<comment type="function">
    <text evidence="1">Catalyzes the folate-dependent formation of 5-methyl-uridine at position 54 (M-5-U54) in all tRNAs.</text>
</comment>
<comment type="catalytic activity">
    <reaction evidence="1">
        <text>uridine(54) in tRNA + (6R)-5,10-methylene-5,6,7,8-tetrahydrofolate + NADH + H(+) = 5-methyluridine(54) in tRNA + (6S)-5,6,7,8-tetrahydrofolate + NAD(+)</text>
        <dbReference type="Rhea" id="RHEA:16873"/>
        <dbReference type="Rhea" id="RHEA-COMP:10167"/>
        <dbReference type="Rhea" id="RHEA-COMP:10193"/>
        <dbReference type="ChEBI" id="CHEBI:15378"/>
        <dbReference type="ChEBI" id="CHEBI:15636"/>
        <dbReference type="ChEBI" id="CHEBI:57453"/>
        <dbReference type="ChEBI" id="CHEBI:57540"/>
        <dbReference type="ChEBI" id="CHEBI:57945"/>
        <dbReference type="ChEBI" id="CHEBI:65315"/>
        <dbReference type="ChEBI" id="CHEBI:74447"/>
        <dbReference type="EC" id="2.1.1.74"/>
    </reaction>
</comment>
<comment type="catalytic activity">
    <reaction evidence="1">
        <text>uridine(54) in tRNA + (6R)-5,10-methylene-5,6,7,8-tetrahydrofolate + NADPH + H(+) = 5-methyluridine(54) in tRNA + (6S)-5,6,7,8-tetrahydrofolate + NADP(+)</text>
        <dbReference type="Rhea" id="RHEA:62372"/>
        <dbReference type="Rhea" id="RHEA-COMP:10167"/>
        <dbReference type="Rhea" id="RHEA-COMP:10193"/>
        <dbReference type="ChEBI" id="CHEBI:15378"/>
        <dbReference type="ChEBI" id="CHEBI:15636"/>
        <dbReference type="ChEBI" id="CHEBI:57453"/>
        <dbReference type="ChEBI" id="CHEBI:57783"/>
        <dbReference type="ChEBI" id="CHEBI:58349"/>
        <dbReference type="ChEBI" id="CHEBI:65315"/>
        <dbReference type="ChEBI" id="CHEBI:74447"/>
        <dbReference type="EC" id="2.1.1.74"/>
    </reaction>
</comment>
<comment type="cofactor">
    <cofactor evidence="1">
        <name>FAD</name>
        <dbReference type="ChEBI" id="CHEBI:57692"/>
    </cofactor>
</comment>
<comment type="subcellular location">
    <subcellularLocation>
        <location evidence="1">Cytoplasm</location>
    </subcellularLocation>
</comment>
<comment type="similarity">
    <text evidence="1">Belongs to the MnmG family. TrmFO subfamily.</text>
</comment>
<reference key="1">
    <citation type="journal article" date="2004" name="Nature">
        <title>Genome sequence of Silicibacter pomeroyi reveals adaptations to the marine environment.</title>
        <authorList>
            <person name="Moran M.A."/>
            <person name="Buchan A."/>
            <person name="Gonzalez J.M."/>
            <person name="Heidelberg J.F."/>
            <person name="Whitman W.B."/>
            <person name="Kiene R.P."/>
            <person name="Henriksen J.R."/>
            <person name="King G.M."/>
            <person name="Belas R."/>
            <person name="Fuqua C."/>
            <person name="Brinkac L.M."/>
            <person name="Lewis M."/>
            <person name="Johri S."/>
            <person name="Weaver B."/>
            <person name="Pai G."/>
            <person name="Eisen J.A."/>
            <person name="Rahe E."/>
            <person name="Sheldon W.M."/>
            <person name="Ye W."/>
            <person name="Miller T.R."/>
            <person name="Carlton J."/>
            <person name="Rasko D.A."/>
            <person name="Paulsen I.T."/>
            <person name="Ren Q."/>
            <person name="Daugherty S.C."/>
            <person name="DeBoy R.T."/>
            <person name="Dodson R.J."/>
            <person name="Durkin A.S."/>
            <person name="Madupu R."/>
            <person name="Nelson W.C."/>
            <person name="Sullivan S.A."/>
            <person name="Rosovitz M.J."/>
            <person name="Haft D.H."/>
            <person name="Selengut J."/>
            <person name="Ward N."/>
        </authorList>
    </citation>
    <scope>NUCLEOTIDE SEQUENCE [LARGE SCALE GENOMIC DNA]</scope>
    <source>
        <strain>ATCC 700808 / DSM 15171 / DSS-3</strain>
    </source>
</reference>
<reference key="2">
    <citation type="journal article" date="2014" name="Stand. Genomic Sci.">
        <title>An updated genome annotation for the model marine bacterium Ruegeria pomeroyi DSS-3.</title>
        <authorList>
            <person name="Rivers A.R."/>
            <person name="Smith C.B."/>
            <person name="Moran M.A."/>
        </authorList>
    </citation>
    <scope>GENOME REANNOTATION</scope>
    <source>
        <strain>ATCC 700808 / DSM 15171 / DSS-3</strain>
    </source>
</reference>